<feature type="chain" id="PRO_0000058553" description="Mediator of RNA polymerase II transcription subunit 1">
    <location>
        <begin position="1"/>
        <end position="1575"/>
    </location>
</feature>
<feature type="region of interest" description="Interaction with the Mediator complex and THRA" evidence="1">
    <location>
        <begin position="1"/>
        <end position="670"/>
    </location>
</feature>
<feature type="region of interest" description="Interaction with ESR1" evidence="2">
    <location>
        <begin position="16"/>
        <end position="590"/>
    </location>
</feature>
<feature type="region of interest" description="Interaction with the Mediator complex" evidence="1">
    <location>
        <begin position="108"/>
        <end position="212"/>
    </location>
</feature>
<feature type="region of interest" description="Interaction with the Mediator complex" evidence="1">
    <location>
        <begin position="215"/>
        <end position="390"/>
    </location>
</feature>
<feature type="region of interest" description="Interaction with THRA" evidence="1">
    <location>
        <begin position="405"/>
        <end position="644"/>
    </location>
</feature>
<feature type="region of interest" description="Interaction with VDR" evidence="1">
    <location>
        <begin position="542"/>
        <end position="789"/>
    </location>
</feature>
<feature type="region of interest" description="Disordered" evidence="3">
    <location>
        <begin position="609"/>
        <end position="706"/>
    </location>
</feature>
<feature type="region of interest" description="Interaction with GATA1" evidence="18">
    <location>
        <begin position="622"/>
        <end position="701"/>
    </location>
</feature>
<feature type="region of interest" description="Interaction with PPARGC1A and THRA" evidence="1">
    <location>
        <begin position="622"/>
        <end position="701"/>
    </location>
</feature>
<feature type="region of interest" description="Interaction with ESR1" evidence="1">
    <location>
        <begin position="656"/>
        <end position="1066"/>
    </location>
</feature>
<feature type="region of interest" description="Disordered" evidence="3">
    <location>
        <begin position="737"/>
        <end position="760"/>
    </location>
</feature>
<feature type="region of interest" description="Disordered" evidence="3">
    <location>
        <begin position="791"/>
        <end position="818"/>
    </location>
</feature>
<feature type="region of interest" description="Disordered" evidence="3">
    <location>
        <begin position="874"/>
        <end position="895"/>
    </location>
</feature>
<feature type="region of interest" description="Disordered" evidence="3">
    <location>
        <begin position="951"/>
        <end position="1564"/>
    </location>
</feature>
<feature type="region of interest" description="Interaction with TP53" evidence="1">
    <location>
        <begin position="1251"/>
        <end position="1423"/>
    </location>
</feature>
<feature type="short sequence motif" description="LXXLL motif 1">
    <location>
        <begin position="604"/>
        <end position="608"/>
    </location>
</feature>
<feature type="short sequence motif" description="LXXLL motif 2">
    <location>
        <begin position="645"/>
        <end position="649"/>
    </location>
</feature>
<feature type="short sequence motif" description="Integrase domain-binding motif (IBM)" evidence="2">
    <location>
        <begin position="875"/>
        <end position="902"/>
    </location>
</feature>
<feature type="compositionally biased region" description="Pro residues" evidence="3">
    <location>
        <begin position="622"/>
        <end position="632"/>
    </location>
</feature>
<feature type="compositionally biased region" description="Polar residues" evidence="3">
    <location>
        <begin position="655"/>
        <end position="675"/>
    </location>
</feature>
<feature type="compositionally biased region" description="Basic and acidic residues" evidence="3">
    <location>
        <begin position="696"/>
        <end position="706"/>
    </location>
</feature>
<feature type="compositionally biased region" description="Polar residues" evidence="3">
    <location>
        <begin position="808"/>
        <end position="818"/>
    </location>
</feature>
<feature type="compositionally biased region" description="Basic and acidic residues" evidence="3">
    <location>
        <begin position="963"/>
        <end position="974"/>
    </location>
</feature>
<feature type="compositionally biased region" description="Gly residues" evidence="3">
    <location>
        <begin position="976"/>
        <end position="986"/>
    </location>
</feature>
<feature type="compositionally biased region" description="Low complexity" evidence="3">
    <location>
        <begin position="1034"/>
        <end position="1051"/>
    </location>
</feature>
<feature type="compositionally biased region" description="Low complexity" evidence="3">
    <location>
        <begin position="1078"/>
        <end position="1094"/>
    </location>
</feature>
<feature type="compositionally biased region" description="Low complexity" evidence="3">
    <location>
        <begin position="1101"/>
        <end position="1152"/>
    </location>
</feature>
<feature type="compositionally biased region" description="Polar residues" evidence="3">
    <location>
        <begin position="1158"/>
        <end position="1184"/>
    </location>
</feature>
<feature type="compositionally biased region" description="Low complexity" evidence="3">
    <location>
        <begin position="1185"/>
        <end position="1197"/>
    </location>
</feature>
<feature type="compositionally biased region" description="Low complexity" evidence="3">
    <location>
        <begin position="1220"/>
        <end position="1258"/>
    </location>
</feature>
<feature type="compositionally biased region" description="Low complexity" evidence="3">
    <location>
        <begin position="1265"/>
        <end position="1295"/>
    </location>
</feature>
<feature type="compositionally biased region" description="Polar residues" evidence="3">
    <location>
        <begin position="1331"/>
        <end position="1352"/>
    </location>
</feature>
<feature type="compositionally biased region" description="Basic and acidic residues" evidence="3">
    <location>
        <begin position="1354"/>
        <end position="1366"/>
    </location>
</feature>
<feature type="compositionally biased region" description="Polar residues" evidence="3">
    <location>
        <begin position="1427"/>
        <end position="1442"/>
    </location>
</feature>
<feature type="compositionally biased region" description="Polar residues" evidence="3">
    <location>
        <begin position="1450"/>
        <end position="1484"/>
    </location>
</feature>
<feature type="compositionally biased region" description="Basic residues" evidence="3">
    <location>
        <begin position="1498"/>
        <end position="1507"/>
    </location>
</feature>
<feature type="compositionally biased region" description="Polar residues" evidence="3">
    <location>
        <begin position="1527"/>
        <end position="1545"/>
    </location>
</feature>
<feature type="modified residue" description="Phosphoserine" evidence="2">
    <location>
        <position position="588"/>
    </location>
</feature>
<feature type="modified residue" description="Phosphoserine" evidence="35">
    <location>
        <position position="664"/>
    </location>
</feature>
<feature type="modified residue" description="Phosphoserine" evidence="2">
    <location>
        <position position="795"/>
    </location>
</feature>
<feature type="modified residue" description="Phosphothreonine" evidence="35">
    <location>
        <position position="805"/>
    </location>
</feature>
<feature type="modified residue" description="Phosphoserine" evidence="2">
    <location>
        <position position="887"/>
    </location>
</feature>
<feature type="modified residue" description="Phosphoserine" evidence="34">
    <location>
        <position position="953"/>
    </location>
</feature>
<feature type="modified residue" description="Phosphoserine" evidence="34 35">
    <location>
        <position position="955"/>
    </location>
</feature>
<feature type="modified residue" description="Phosphothreonine; by MAPK1 or MAPK3" evidence="2">
    <location>
        <position position="1032"/>
    </location>
</feature>
<feature type="modified residue" description="Phosphothreonine" evidence="35">
    <location>
        <position position="1051"/>
    </location>
</feature>
<feature type="modified residue" description="Phosphothreonine" evidence="35">
    <location>
        <position position="1057"/>
    </location>
</feature>
<feature type="modified residue" description="Phosphoserine" evidence="35">
    <location>
        <position position="1158"/>
    </location>
</feature>
<feature type="modified residue" description="N6-acetyllysine" evidence="2">
    <location>
        <position position="1179"/>
    </location>
</feature>
<feature type="modified residue" description="Phosphoserine" evidence="35">
    <location>
        <position position="1209"/>
    </location>
</feature>
<feature type="modified residue" description="Phosphothreonine" evidence="2">
    <location>
        <position position="1217"/>
    </location>
</feature>
<feature type="modified residue" description="Phosphoserine" evidence="2">
    <location>
        <position position="1225"/>
    </location>
</feature>
<feature type="modified residue" description="Phosphoserine" evidence="2">
    <location>
        <position position="1304"/>
    </location>
</feature>
<feature type="modified residue" description="Phosphoserine" evidence="2">
    <location>
        <position position="1349"/>
    </location>
</feature>
<feature type="modified residue" description="Phosphoserine" evidence="2">
    <location>
        <position position="1405"/>
    </location>
</feature>
<feature type="modified residue" description="Phosphoserine" evidence="35">
    <location>
        <position position="1435"/>
    </location>
</feature>
<feature type="modified residue" description="Phosphothreonine" evidence="35">
    <location>
        <position position="1442"/>
    </location>
</feature>
<feature type="modified residue" description="Phosphothreonine; by MAPK1 or MAPK3" evidence="2">
    <location>
        <position position="1459"/>
    </location>
</feature>
<feature type="modified residue" description="Phosphoserine" evidence="35">
    <location>
        <position position="1465"/>
    </location>
</feature>
<feature type="modified residue" description="Phosphoserine" evidence="35">
    <location>
        <position position="1467"/>
    </location>
</feature>
<feature type="modified residue" description="Phosphoserine" evidence="35">
    <location>
        <position position="1481"/>
    </location>
</feature>
<feature type="modified residue" description="Phosphoserine" evidence="2">
    <location>
        <position position="1483"/>
    </location>
</feature>
<feature type="modified residue" description="Phosphoserine" evidence="35">
    <location>
        <position position="1484"/>
    </location>
</feature>
<feature type="modified residue" description="N6-acetyllysine" evidence="2">
    <location>
        <position position="1523"/>
    </location>
</feature>
<feature type="splice variant" id="VSP_051892" description="In isoform 4." evidence="22 25">
    <location>
        <begin position="1"/>
        <end position="15"/>
    </location>
</feature>
<feature type="splice variant" id="VSP_051893" description="In isoform 2." evidence="23">
    <original>YGMTTGNNPMSGTTTPTNTFPGGPITTLFNMSMSIKDRHESVGHGEDFSKVSQNPILTSLLQITGNGGSTIGSSPTPPHHTPPPV</original>
    <variation>VEEKRQDKPSLGHLPPIQVCSPSCLKDGKDMKSTCTYLLLLLLLLEFMVFCFFFFFLTYSSVFGLHVKGLWTKICSDVQEYFSVS</variation>
    <location>
        <begin position="548"/>
        <end position="632"/>
    </location>
</feature>
<feature type="splice variant" id="VSP_051894" description="In isoform 3." evidence="23 24">
    <original>YGMTTGNNP</original>
    <variation>SKNPELGSG</variation>
    <location>
        <begin position="548"/>
        <end position="556"/>
    </location>
</feature>
<feature type="splice variant" id="VSP_051895" description="In isoform 3." evidence="23 24">
    <location>
        <begin position="557"/>
        <end position="1575"/>
    </location>
</feature>
<feature type="splice variant" id="VSP_051896" description="In isoform 2." evidence="23">
    <location>
        <begin position="633"/>
        <end position="1575"/>
    </location>
</feature>
<feature type="sequence variant" description="In strain: ISS and 129/Ola." evidence="6 10">
    <original>T</original>
    <variation>S</variation>
    <location>
        <position position="960"/>
    </location>
</feature>
<feature type="sequence variant" description="In strain: ISS and 129/Ola." evidence="6 10">
    <original>T</original>
    <variation>M</variation>
    <location>
        <position position="1348"/>
    </location>
</feature>
<feature type="sequence conflict" description="In Ref. 1; AAC31118." evidence="26" ref="1">
    <original>I</original>
    <variation>L</variation>
    <location>
        <position position="84"/>
    </location>
</feature>
<feature type="sequence conflict" description="In Ref. 6; AAH21440." evidence="26" ref="6">
    <original>A</original>
    <variation>T</variation>
    <location>
        <position position="198"/>
    </location>
</feature>
<feature type="sequence conflict" description="In Ref. 4; BAE27757." evidence="26" ref="4">
    <original>L</original>
    <variation>H</variation>
    <location>
        <position position="211"/>
    </location>
</feature>
<feature type="sequence conflict" description="In Ref. 1; AAC31118." evidence="26" ref="1">
    <original>F</original>
    <variation>S</variation>
    <location>
        <position position="303"/>
    </location>
</feature>
<feature type="sequence conflict" description="In Ref. 4; BAC35779." evidence="26" ref="4">
    <original>LPDGQSLQ</original>
    <variation>VLPNKAVS</variation>
    <location>
        <begin position="382"/>
        <end position="389"/>
    </location>
</feature>
<feature type="sequence conflict" description="In Ref. 4; BAC33607." evidence="26" ref="4">
    <original>E</original>
    <variation>K</variation>
    <location>
        <position position="948"/>
    </location>
</feature>
<feature type="sequence conflict" description="In Ref. 4; BAC33607." evidence="26" ref="4">
    <original>G</original>
    <variation>A</variation>
    <location>
        <position position="964"/>
    </location>
</feature>
<feature type="sequence conflict" description="In Ref. 1; AAC31118." evidence="26" ref="1">
    <original>G</original>
    <variation>S</variation>
    <location>
        <position position="1323"/>
    </location>
</feature>
<feature type="sequence conflict" description="In Ref. 1; AAC31118." evidence="26" ref="1">
    <original>G</original>
    <variation>R</variation>
    <location>
        <position position="1387"/>
    </location>
</feature>
<feature type="helix" evidence="36">
    <location>
        <begin position="643"/>
        <end position="649"/>
    </location>
</feature>
<evidence type="ECO:0000250" key="1"/>
<evidence type="ECO:0000250" key="2">
    <source>
        <dbReference type="UniProtKB" id="Q15648"/>
    </source>
</evidence>
<evidence type="ECO:0000256" key="3">
    <source>
        <dbReference type="SAM" id="MobiDB-lite"/>
    </source>
</evidence>
<evidence type="ECO:0000269" key="4">
    <source>
    </source>
</evidence>
<evidence type="ECO:0000269" key="5">
    <source>
    </source>
</evidence>
<evidence type="ECO:0000269" key="6">
    <source>
    </source>
</evidence>
<evidence type="ECO:0000269" key="7">
    <source>
    </source>
</evidence>
<evidence type="ECO:0000269" key="8">
    <source>
    </source>
</evidence>
<evidence type="ECO:0000269" key="9">
    <source>
    </source>
</evidence>
<evidence type="ECO:0000269" key="10">
    <source>
    </source>
</evidence>
<evidence type="ECO:0000269" key="11">
    <source>
    </source>
</evidence>
<evidence type="ECO:0000269" key="12">
    <source>
    </source>
</evidence>
<evidence type="ECO:0000269" key="13">
    <source>
    </source>
</evidence>
<evidence type="ECO:0000269" key="14">
    <source>
    </source>
</evidence>
<evidence type="ECO:0000269" key="15">
    <source>
    </source>
</evidence>
<evidence type="ECO:0000269" key="16">
    <source>
    </source>
</evidence>
<evidence type="ECO:0000269" key="17">
    <source>
    </source>
</evidence>
<evidence type="ECO:0000269" key="18">
    <source>
    </source>
</evidence>
<evidence type="ECO:0000269" key="19">
    <source>
    </source>
</evidence>
<evidence type="ECO:0000269" key="20">
    <source>
    </source>
</evidence>
<evidence type="ECO:0000269" key="21">
    <source>
    </source>
</evidence>
<evidence type="ECO:0000303" key="22">
    <source>
    </source>
</evidence>
<evidence type="ECO:0000303" key="23">
    <source>
    </source>
</evidence>
<evidence type="ECO:0000303" key="24">
    <source>
    </source>
</evidence>
<evidence type="ECO:0000303" key="25">
    <source>
    </source>
</evidence>
<evidence type="ECO:0000305" key="26"/>
<evidence type="ECO:0000312" key="27">
    <source>
        <dbReference type="EMBL" id="AAC31118.1"/>
    </source>
</evidence>
<evidence type="ECO:0000312" key="28">
    <source>
        <dbReference type="EMBL" id="AAH21440.1"/>
    </source>
</evidence>
<evidence type="ECO:0000312" key="29">
    <source>
        <dbReference type="EMBL" id="AAH79636.1"/>
    </source>
</evidence>
<evidence type="ECO:0000312" key="30">
    <source>
        <dbReference type="EMBL" id="AAK56101.1"/>
    </source>
</evidence>
<evidence type="ECO:0000312" key="31">
    <source>
        <dbReference type="EMBL" id="AAK56102.1"/>
    </source>
</evidence>
<evidence type="ECO:0000312" key="32">
    <source>
        <dbReference type="EMBL" id="AAN75014.1"/>
    </source>
</evidence>
<evidence type="ECO:0000312" key="33">
    <source>
        <dbReference type="EMBL" id="BAC35779.2"/>
    </source>
</evidence>
<evidence type="ECO:0007744" key="34">
    <source>
    </source>
</evidence>
<evidence type="ECO:0007744" key="35">
    <source>
    </source>
</evidence>
<evidence type="ECO:0007829" key="36">
    <source>
        <dbReference type="PDB" id="1XDK"/>
    </source>
</evidence>
<comment type="function">
    <text evidence="2 4 7 8 10 11 12 13 16 18 21">Component of the Mediator complex, a coactivator involved in the regulated transcription of nearly all RNA polymerase II-dependent genes. Mediator functions as a bridge to convey information from gene-specific regulatory proteins to the basal RNA polymerase II transcription machinery. Mediator is recruited to promoters by direct interactions with regulatory proteins and serves as a scaffold for the assembly of a functional preinitiation complex with RNA polymerase II and the general transcription factors. Essential for embryogenesis, including development of the central nervous system, heart, liver and placenta and for erythropoiesis. Also required for normal transcriptional control of thyroid-stimulating hormone beta (TSHB) in the pituitary. Acts as a coactivator for GATA1-mediated transcriptional activation during erythroid differentiation of K562 erythroleukemia cells (By similarity).</text>
</comment>
<comment type="subunit">
    <text evidence="2 5 7 9 11 13 15 18 19 20 21">Component of the Mediator complex, which is composed of MED1, MED4, MED6, MED7, MED8, MED9, MED10, MED11, MED12, MED13, MED13L, MED14, MED15, MED16, MED17, MED18, MED19, MED20, MED21, MED22, MED23, MED24, MED25, MED26, MED27, MED29, MED30, MED31, CCNC, CDK8 and CDC2L6/CDK11. The MED12, MED13, CCNC and CDK8 subunits form a distinct module termed the CDK8 module. Mediator containing the CDK8 module is less active than Mediator lacking this module in supporting transcriptional activation. Individual preparations of the Mediator complex lacking one or more distinct subunits have been variously termed ARC, CRSP, DRIP, PC2, SMCC and TRAP. This subunit specifically interacts with a number of nuclear receptors in a ligand-dependent fashion including AR, ESR1, ESR2, PPARA, PPARG, RORA, RXRA, RXRG, THRA, THRB and VDR. Interacts with CTNNB1, GABPA, GLI3, PPARGC1A and TP53. Interacts with GATA1 and YWHAH. Interacts with CLOCK; this interaction requires the presence of THRAP3. Interacts with CCAR1 (By similarity). Interacts with NR4A3 (PubMed:12709428). Interacts (via IBM motif) with PSIP1 (via IBD domain); phosphorylation increases its affinity for PSIP1 (By similarity). Interacts with USP22 (PubMed:32069354).</text>
</comment>
<comment type="subcellular location">
    <subcellularLocation>
        <location evidence="12">Nucleus</location>
    </subcellularLocation>
    <text evidence="1">A subset of the protein may enter the nucleolus subsequent to phosphorylation by MAPK1 or MAPK3.</text>
</comment>
<comment type="alternative products">
    <event type="alternative splicing"/>
    <isoform>
        <id>Q925J9-1</id>
        <name evidence="24">1</name>
        <sequence type="displayed"/>
    </isoform>
    <isoform>
        <id>Q925J9-2</id>
        <name evidence="23">2</name>
        <sequence type="described" ref="VSP_051893 VSP_051896"/>
    </isoform>
    <isoform>
        <id>Q925J9-3</id>
        <name evidence="24">3</name>
        <sequence type="described" ref="VSP_051894 VSP_051895"/>
    </isoform>
    <isoform>
        <id>Q925J9-4</id>
        <name evidence="6 21">4</name>
        <sequence type="described" ref="VSP_051892"/>
    </isoform>
</comment>
<comment type="tissue specificity">
    <text evidence="10 21">Widely expressed in the adult, with high levels of expression in the liver, lung, intestinal mucosa, kidney cortex, thymic cortex, splenic follicle and seminiferous epithelium in testis. Also expressed in the adult heart, brain, spleen and skeletal muscle.</text>
</comment>
<comment type="developmental stage">
    <text evidence="4 10">Widely expressed during embryonic development; at stages 9.5 dpc-10.5 dpc, expression is strongest in neural tissues. At 11.5 dpc-12.5 dpc, expression is abundant throughout embryonic tissues, being strongest in the developing liver, primitive gut, nasopharynx, and developing limb buds. Moderately expressed at this stage in the brain and optic stalk, branchial arch and urogential ridge. Expressed at a low level in the heart. By stage 13.5 dpc-14.5 dpc, expression is abundant in the forebrain, vagus nerve, dorsal root ganglia, nasopharynx, kidney, liver, pancreas, intestine, gut, thymus, lung, genital tubercle, tongue and lower jaw. Moderately expressed in the midbrain and expressed at a low level in the heart and large blood vessels. In the developing placenta, expression is moderate in the giant and spongiotrophoblast cell layers and strongest in the labyrinthine portion throughout 9.5 dpc-13.5 dpc.</text>
</comment>
<comment type="PTM">
    <text evidence="2">Phosphorylated by MAPK1 or MAPK3 during G2/M phase which may enhance protein stability and promote entry into the nucleolus (By similarity). Phosphorylation increases its interaction with PSIP1 (By similarity).</text>
</comment>
<comment type="similarity">
    <text evidence="26">Belongs to the Mediator complex subunit 1 family.</text>
</comment>
<comment type="sequence caution" evidence="26">
    <conflict type="erroneous initiation">
        <sequence resource="EMBL-CDS" id="AAH21440"/>
    </conflict>
    <text>Truncated N-terminus.</text>
</comment>
<protein>
    <recommendedName>
        <fullName>Mediator of RNA polymerase II transcription subunit 1</fullName>
    </recommendedName>
    <alternativeName>
        <fullName>Mediator complex subunit 1</fullName>
    </alternativeName>
    <alternativeName>
        <fullName>Peroxisome proliferator-activated receptor-binding protein</fullName>
        <shortName>PBP</shortName>
        <shortName>PPAR-binding protein</shortName>
    </alternativeName>
    <alternativeName>
        <fullName>Thyroid hormone receptor-associated protein complex 220 kDa component</fullName>
        <shortName>Trap220</shortName>
    </alternativeName>
    <alternativeName>
        <fullName>Thyroid receptor-interacting protein 2</fullName>
        <shortName>TR-interacting protein 2</shortName>
        <shortName>TRIP-2</shortName>
    </alternativeName>
</protein>
<dbReference type="EMBL" id="AF000294">
    <property type="protein sequence ID" value="AAC31118.1"/>
    <property type="molecule type" value="mRNA"/>
</dbReference>
<dbReference type="EMBL" id="AF332073">
    <property type="protein sequence ID" value="AAK56101.1"/>
    <property type="molecule type" value="mRNA"/>
</dbReference>
<dbReference type="EMBL" id="AF332074">
    <property type="protein sequence ID" value="AAK56102.1"/>
    <property type="molecule type" value="mRNA"/>
</dbReference>
<dbReference type="EMBL" id="AY176046">
    <property type="protein sequence ID" value="AAN75014.1"/>
    <property type="molecule type" value="Genomic_DNA"/>
</dbReference>
<dbReference type="EMBL" id="AK049203">
    <property type="protein sequence ID" value="BAC33607.2"/>
    <property type="molecule type" value="mRNA"/>
</dbReference>
<dbReference type="EMBL" id="AK054437">
    <property type="protein sequence ID" value="BAC35779.2"/>
    <property type="molecule type" value="mRNA"/>
</dbReference>
<dbReference type="EMBL" id="AK147199">
    <property type="protein sequence ID" value="BAE27757.1"/>
    <property type="molecule type" value="mRNA"/>
</dbReference>
<dbReference type="EMBL" id="AL591205">
    <property type="status" value="NOT_ANNOTATED_CDS"/>
    <property type="molecule type" value="Genomic_DNA"/>
</dbReference>
<dbReference type="EMBL" id="BC021440">
    <property type="protein sequence ID" value="AAH21440.1"/>
    <property type="status" value="ALT_INIT"/>
    <property type="molecule type" value="mRNA"/>
</dbReference>
<dbReference type="EMBL" id="BC079636">
    <property type="protein sequence ID" value="AAH79636.1"/>
    <property type="molecule type" value="mRNA"/>
</dbReference>
<dbReference type="CCDS" id="CCDS25341.1">
    <molecule id="Q925J9-4"/>
</dbReference>
<dbReference type="CCDS" id="CCDS36300.1">
    <molecule id="Q925J9-1"/>
</dbReference>
<dbReference type="PIR" id="T02885">
    <property type="entry name" value="T02885"/>
</dbReference>
<dbReference type="RefSeq" id="NP_001073587.1">
    <molecule id="Q925J9-1"/>
    <property type="nucleotide sequence ID" value="NM_001080118.2"/>
</dbReference>
<dbReference type="RefSeq" id="NP_038662.2">
    <molecule id="Q925J9-4"/>
    <property type="nucleotide sequence ID" value="NM_013634.3"/>
</dbReference>
<dbReference type="RefSeq" id="NP_598788.2">
    <molecule id="Q925J9-3"/>
    <property type="nucleotide sequence ID" value="NM_134027.3"/>
</dbReference>
<dbReference type="PDB" id="1XDK">
    <property type="method" value="X-ray"/>
    <property type="resolution" value="2.90 A"/>
    <property type="chains" value="C/D/G/H=641-654"/>
</dbReference>
<dbReference type="PDB" id="8T1I">
    <property type="method" value="EM"/>
    <property type="resolution" value="4.68 A"/>
    <property type="chains" value="A=1-1575"/>
</dbReference>
<dbReference type="PDB" id="8T1L">
    <property type="method" value="EM"/>
    <property type="resolution" value="4.83 A"/>
    <property type="chains" value="A=1-1575"/>
</dbReference>
<dbReference type="PDBsum" id="1XDK"/>
<dbReference type="PDBsum" id="8T1I"/>
<dbReference type="PDBsum" id="8T1L"/>
<dbReference type="EMDB" id="EMD-40968"/>
<dbReference type="EMDB" id="EMD-40971"/>
<dbReference type="SMR" id="Q925J9"/>
<dbReference type="BioGRID" id="202318">
    <property type="interactions" value="15"/>
</dbReference>
<dbReference type="ComplexPortal" id="CPX-3264">
    <property type="entry name" value="Core mediator complex"/>
</dbReference>
<dbReference type="CORUM" id="Q925J9"/>
<dbReference type="DIP" id="DIP-59232N"/>
<dbReference type="ELM" id="Q925J9"/>
<dbReference type="FunCoup" id="Q925J9">
    <property type="interactions" value="3604"/>
</dbReference>
<dbReference type="IntAct" id="Q925J9">
    <property type="interactions" value="9"/>
</dbReference>
<dbReference type="MINT" id="Q925J9"/>
<dbReference type="STRING" id="10090.ENSMUSP00000103169"/>
<dbReference type="GlyGen" id="Q925J9">
    <property type="glycosylation" value="6 sites, 3 N-linked glycans (3 sites), 1 O-linked glycan (1 site)"/>
</dbReference>
<dbReference type="iPTMnet" id="Q925J9"/>
<dbReference type="PhosphoSitePlus" id="Q925J9"/>
<dbReference type="SwissPalm" id="Q925J9"/>
<dbReference type="jPOST" id="Q925J9"/>
<dbReference type="PaxDb" id="10090-ENSMUSP00000103169"/>
<dbReference type="PeptideAtlas" id="Q925J9"/>
<dbReference type="ProteomicsDB" id="292184">
    <molecule id="Q925J9-1"/>
</dbReference>
<dbReference type="ProteomicsDB" id="292185">
    <molecule id="Q925J9-2"/>
</dbReference>
<dbReference type="ProteomicsDB" id="292186">
    <molecule id="Q925J9-3"/>
</dbReference>
<dbReference type="ProteomicsDB" id="292187">
    <molecule id="Q925J9-4"/>
</dbReference>
<dbReference type="Pumba" id="Q925J9"/>
<dbReference type="Antibodypedia" id="4326">
    <property type="antibodies" value="526 antibodies from 39 providers"/>
</dbReference>
<dbReference type="DNASU" id="19014"/>
<dbReference type="Ensembl" id="ENSMUST00000018304.7">
    <molecule id="Q925J9-4"/>
    <property type="protein sequence ID" value="ENSMUSP00000018304.6"/>
    <property type="gene ID" value="ENSMUSG00000018160.16"/>
</dbReference>
<dbReference type="Ensembl" id="ENSMUST00000107545.9">
    <molecule id="Q925J9-1"/>
    <property type="protein sequence ID" value="ENSMUSP00000103169.3"/>
    <property type="gene ID" value="ENSMUSG00000018160.16"/>
</dbReference>
<dbReference type="GeneID" id="19014"/>
<dbReference type="KEGG" id="mmu:19014"/>
<dbReference type="UCSC" id="uc007lfo.1">
    <molecule id="Q925J9-3"/>
    <property type="organism name" value="mouse"/>
</dbReference>
<dbReference type="UCSC" id="uc007lfp.1">
    <molecule id="Q925J9-1"/>
    <property type="organism name" value="mouse"/>
</dbReference>
<dbReference type="AGR" id="MGI:1100846"/>
<dbReference type="CTD" id="5469"/>
<dbReference type="MGI" id="MGI:1100846">
    <property type="gene designation" value="Med1"/>
</dbReference>
<dbReference type="VEuPathDB" id="HostDB:ENSMUSG00000018160"/>
<dbReference type="eggNOG" id="ENOG502QPZ7">
    <property type="taxonomic scope" value="Eukaryota"/>
</dbReference>
<dbReference type="GeneTree" id="ENSGT00660000095569"/>
<dbReference type="HOGENOM" id="CLU_245015_0_0_1"/>
<dbReference type="InParanoid" id="Q925J9"/>
<dbReference type="OMA" id="LFEAQPT"/>
<dbReference type="OrthoDB" id="2281547at2759"/>
<dbReference type="PhylomeDB" id="Q925J9"/>
<dbReference type="TreeFam" id="TF324954"/>
<dbReference type="Reactome" id="R-MMU-383280">
    <property type="pathway name" value="Nuclear Receptor transcription pathway"/>
</dbReference>
<dbReference type="Reactome" id="R-MMU-400206">
    <property type="pathway name" value="Regulation of lipid metabolism by PPARalpha"/>
</dbReference>
<dbReference type="Reactome" id="R-MMU-9018519">
    <property type="pathway name" value="Estrogen-dependent gene expression"/>
</dbReference>
<dbReference type="Reactome" id="R-MMU-9707564">
    <property type="pathway name" value="Cytoprotection by HMOX1"/>
</dbReference>
<dbReference type="BioGRID-ORCS" id="19014">
    <property type="hits" value="19 hits in 83 CRISPR screens"/>
</dbReference>
<dbReference type="CD-CODE" id="D70B1BED">
    <property type="entry name" value="Synthetic Condensate 000318"/>
</dbReference>
<dbReference type="ChiTaRS" id="Med1">
    <property type="organism name" value="mouse"/>
</dbReference>
<dbReference type="EvolutionaryTrace" id="Q925J9"/>
<dbReference type="PRO" id="PR:Q925J9"/>
<dbReference type="Proteomes" id="UP000000589">
    <property type="component" value="Chromosome 11"/>
</dbReference>
<dbReference type="RNAct" id="Q925J9">
    <property type="molecule type" value="protein"/>
</dbReference>
<dbReference type="Bgee" id="ENSMUSG00000018160">
    <property type="expression patterns" value="Expressed in rostral migratory stream and 273 other cell types or tissues"/>
</dbReference>
<dbReference type="ExpressionAtlas" id="Q925J9">
    <property type="expression patterns" value="baseline and differential"/>
</dbReference>
<dbReference type="GO" id="GO:0000785">
    <property type="term" value="C:chromatin"/>
    <property type="evidence" value="ECO:0007669"/>
    <property type="project" value="Ensembl"/>
</dbReference>
<dbReference type="GO" id="GO:0070847">
    <property type="term" value="C:core mediator complex"/>
    <property type="evidence" value="ECO:0000266"/>
    <property type="project" value="ComplexPortal"/>
</dbReference>
<dbReference type="GO" id="GO:0016592">
    <property type="term" value="C:mediator complex"/>
    <property type="evidence" value="ECO:0000314"/>
    <property type="project" value="MGI"/>
</dbReference>
<dbReference type="GO" id="GO:0005730">
    <property type="term" value="C:nucleolus"/>
    <property type="evidence" value="ECO:0000250"/>
    <property type="project" value="UniProtKB"/>
</dbReference>
<dbReference type="GO" id="GO:0005654">
    <property type="term" value="C:nucleoplasm"/>
    <property type="evidence" value="ECO:0000304"/>
    <property type="project" value="Reactome"/>
</dbReference>
<dbReference type="GO" id="GO:0005634">
    <property type="term" value="C:nucleus"/>
    <property type="evidence" value="ECO:0000314"/>
    <property type="project" value="MGI"/>
</dbReference>
<dbReference type="GO" id="GO:0032993">
    <property type="term" value="C:protein-DNA complex"/>
    <property type="evidence" value="ECO:0007669"/>
    <property type="project" value="Ensembl"/>
</dbReference>
<dbReference type="GO" id="GO:0000151">
    <property type="term" value="C:ubiquitin ligase complex"/>
    <property type="evidence" value="ECO:0007669"/>
    <property type="project" value="Ensembl"/>
</dbReference>
<dbReference type="GO" id="GO:0003682">
    <property type="term" value="F:chromatin binding"/>
    <property type="evidence" value="ECO:0000314"/>
    <property type="project" value="MGI"/>
</dbReference>
<dbReference type="GO" id="GO:0031490">
    <property type="term" value="F:chromatin DNA binding"/>
    <property type="evidence" value="ECO:0007669"/>
    <property type="project" value="Ensembl"/>
</dbReference>
<dbReference type="GO" id="GO:0003677">
    <property type="term" value="F:DNA binding"/>
    <property type="evidence" value="ECO:0000314"/>
    <property type="project" value="MGI"/>
</dbReference>
<dbReference type="GO" id="GO:0140296">
    <property type="term" value="F:general transcription initiation factor binding"/>
    <property type="evidence" value="ECO:0007669"/>
    <property type="project" value="Ensembl"/>
</dbReference>
<dbReference type="GO" id="GO:0035035">
    <property type="term" value="F:histone acetyltransferase binding"/>
    <property type="evidence" value="ECO:0007669"/>
    <property type="project" value="Ensembl"/>
</dbReference>
<dbReference type="GO" id="GO:0050693">
    <property type="term" value="F:LBD domain binding"/>
    <property type="evidence" value="ECO:0007669"/>
    <property type="project" value="Ensembl"/>
</dbReference>
<dbReference type="GO" id="GO:0030331">
    <property type="term" value="F:nuclear estrogen receptor binding"/>
    <property type="evidence" value="ECO:0007669"/>
    <property type="project" value="Ensembl"/>
</dbReference>
<dbReference type="GO" id="GO:0016922">
    <property type="term" value="F:nuclear receptor binding"/>
    <property type="evidence" value="ECO:0000353"/>
    <property type="project" value="UniProtKB"/>
</dbReference>
<dbReference type="GO" id="GO:0042974">
    <property type="term" value="F:nuclear retinoic acid receptor binding"/>
    <property type="evidence" value="ECO:0007669"/>
    <property type="project" value="Ensembl"/>
</dbReference>
<dbReference type="GO" id="GO:0046966">
    <property type="term" value="F:nuclear thyroid hormone receptor binding"/>
    <property type="evidence" value="ECO:0000250"/>
    <property type="project" value="UniProtKB"/>
</dbReference>
<dbReference type="GO" id="GO:0042809">
    <property type="term" value="F:nuclear vitamin D receptor binding"/>
    <property type="evidence" value="ECO:0007669"/>
    <property type="project" value="Ensembl"/>
</dbReference>
<dbReference type="GO" id="GO:0042975">
    <property type="term" value="F:peroxisome proliferator activated receptor binding"/>
    <property type="evidence" value="ECO:0007669"/>
    <property type="project" value="Ensembl"/>
</dbReference>
<dbReference type="GO" id="GO:1990841">
    <property type="term" value="F:promoter-specific chromatin binding"/>
    <property type="evidence" value="ECO:0000314"/>
    <property type="project" value="MGI"/>
</dbReference>
<dbReference type="GO" id="GO:0044877">
    <property type="term" value="F:protein-containing complex binding"/>
    <property type="evidence" value="ECO:0000314"/>
    <property type="project" value="MGI"/>
</dbReference>
<dbReference type="GO" id="GO:0000978">
    <property type="term" value="F:RNA polymerase II cis-regulatory region sequence-specific DNA binding"/>
    <property type="evidence" value="ECO:0007669"/>
    <property type="project" value="Ensembl"/>
</dbReference>
<dbReference type="GO" id="GO:0061629">
    <property type="term" value="F:RNA polymerase II-specific DNA-binding transcription factor binding"/>
    <property type="evidence" value="ECO:0000353"/>
    <property type="project" value="BHF-UCL"/>
</dbReference>
<dbReference type="GO" id="GO:0003713">
    <property type="term" value="F:transcription coactivator activity"/>
    <property type="evidence" value="ECO:0000314"/>
    <property type="project" value="MGI"/>
</dbReference>
<dbReference type="GO" id="GO:0001223">
    <property type="term" value="F:transcription coactivator binding"/>
    <property type="evidence" value="ECO:0007669"/>
    <property type="project" value="Ensembl"/>
</dbReference>
<dbReference type="GO" id="GO:0003712">
    <property type="term" value="F:transcription coregulator activity"/>
    <property type="evidence" value="ECO:0000250"/>
    <property type="project" value="UniProtKB"/>
</dbReference>
<dbReference type="GO" id="GO:0003714">
    <property type="term" value="F:transcription corepressor activity"/>
    <property type="evidence" value="ECO:0000315"/>
    <property type="project" value="UniProtKB"/>
</dbReference>
<dbReference type="GO" id="GO:0061630">
    <property type="term" value="F:ubiquitin protein ligase activity"/>
    <property type="evidence" value="ECO:0007669"/>
    <property type="project" value="Ensembl"/>
</dbReference>
<dbReference type="GO" id="GO:0006702">
    <property type="term" value="P:androgen biosynthetic process"/>
    <property type="evidence" value="ECO:0000250"/>
    <property type="project" value="UniProtKB"/>
</dbReference>
<dbReference type="GO" id="GO:0001525">
    <property type="term" value="P:angiogenesis"/>
    <property type="evidence" value="ECO:0000315"/>
    <property type="project" value="BHF-UCL"/>
</dbReference>
<dbReference type="GO" id="GO:0009887">
    <property type="term" value="P:animal organ morphogenesis"/>
    <property type="evidence" value="ECO:0000315"/>
    <property type="project" value="MGI"/>
</dbReference>
<dbReference type="GO" id="GO:0031100">
    <property type="term" value="P:animal organ regeneration"/>
    <property type="evidence" value="ECO:0000315"/>
    <property type="project" value="MGI"/>
</dbReference>
<dbReference type="GO" id="GO:0007420">
    <property type="term" value="P:brain development"/>
    <property type="evidence" value="ECO:0000315"/>
    <property type="project" value="MGI"/>
</dbReference>
<dbReference type="GO" id="GO:0043010">
    <property type="term" value="P:camera-type eye development"/>
    <property type="evidence" value="ECO:0000315"/>
    <property type="project" value="MGI"/>
</dbReference>
<dbReference type="GO" id="GO:0000902">
    <property type="term" value="P:cell morphogenesis"/>
    <property type="evidence" value="ECO:0000250"/>
    <property type="project" value="UniProtKB"/>
</dbReference>
<dbReference type="GO" id="GO:0071364">
    <property type="term" value="P:cellular response to epidermal growth factor stimulus"/>
    <property type="evidence" value="ECO:0000250"/>
    <property type="project" value="UniProtKB"/>
</dbReference>
<dbReference type="GO" id="GO:0035729">
    <property type="term" value="P:cellular response to hepatocyte growth factor stimulus"/>
    <property type="evidence" value="ECO:0000315"/>
    <property type="project" value="MGI"/>
</dbReference>
<dbReference type="GO" id="GO:0097067">
    <property type="term" value="P:cellular response to thyroid hormone stimulus"/>
    <property type="evidence" value="ECO:0007669"/>
    <property type="project" value="Ensembl"/>
</dbReference>
<dbReference type="GO" id="GO:0035050">
    <property type="term" value="P:embryonic heart tube development"/>
    <property type="evidence" value="ECO:0000315"/>
    <property type="project" value="MGI"/>
</dbReference>
<dbReference type="GO" id="GO:0035162">
    <property type="term" value="P:embryonic hemopoiesis"/>
    <property type="evidence" value="ECO:0000315"/>
    <property type="project" value="MGI"/>
</dbReference>
<dbReference type="GO" id="GO:0035116">
    <property type="term" value="P:embryonic hindlimb morphogenesis"/>
    <property type="evidence" value="ECO:0000315"/>
    <property type="project" value="MGI"/>
</dbReference>
<dbReference type="GO" id="GO:0001892">
    <property type="term" value="P:embryonic placenta development"/>
    <property type="evidence" value="ECO:0000315"/>
    <property type="project" value="MGI"/>
</dbReference>
<dbReference type="GO" id="GO:0048822">
    <property type="term" value="P:enucleate erythrocyte development"/>
    <property type="evidence" value="ECO:0000315"/>
    <property type="project" value="MGI"/>
</dbReference>
<dbReference type="GO" id="GO:0060750">
    <property type="term" value="P:epithelial cell proliferation involved in mammary gland duct elongation"/>
    <property type="evidence" value="ECO:0000315"/>
    <property type="project" value="MGI"/>
</dbReference>
<dbReference type="GO" id="GO:0048821">
    <property type="term" value="P:erythrocyte development"/>
    <property type="evidence" value="ECO:0000315"/>
    <property type="project" value="BHF-UCL"/>
</dbReference>
<dbReference type="GO" id="GO:0045444">
    <property type="term" value="P:fat cell differentiation"/>
    <property type="evidence" value="ECO:0000315"/>
    <property type="project" value="MGI"/>
</dbReference>
<dbReference type="GO" id="GO:0045023">
    <property type="term" value="P:G0 to G1 transition"/>
    <property type="evidence" value="ECO:0000315"/>
    <property type="project" value="MGI"/>
</dbReference>
<dbReference type="GO" id="GO:0007507">
    <property type="term" value="P:heart development"/>
    <property type="evidence" value="ECO:0000315"/>
    <property type="project" value="MGI"/>
</dbReference>
<dbReference type="GO" id="GO:0060218">
    <property type="term" value="P:hematopoietic stem cell differentiation"/>
    <property type="evidence" value="ECO:0000315"/>
    <property type="project" value="MGI"/>
</dbReference>
<dbReference type="GO" id="GO:0001701">
    <property type="term" value="P:in utero embryonic development"/>
    <property type="evidence" value="ECO:0000315"/>
    <property type="project" value="MGI"/>
</dbReference>
<dbReference type="GO" id="GO:0030216">
    <property type="term" value="P:keratinocyte differentiation"/>
    <property type="evidence" value="ECO:0000250"/>
    <property type="project" value="UniProtKB"/>
</dbReference>
<dbReference type="GO" id="GO:0007595">
    <property type="term" value="P:lactation"/>
    <property type="evidence" value="ECO:0000315"/>
    <property type="project" value="MGI"/>
</dbReference>
<dbReference type="GO" id="GO:0002088">
    <property type="term" value="P:lens development in camera-type eye"/>
    <property type="evidence" value="ECO:0000315"/>
    <property type="project" value="BHF-UCL"/>
</dbReference>
<dbReference type="GO" id="GO:0001889">
    <property type="term" value="P:liver development"/>
    <property type="evidence" value="ECO:0000315"/>
    <property type="project" value="MGI"/>
</dbReference>
<dbReference type="GO" id="GO:0060745">
    <property type="term" value="P:mammary gland branching involved in pregnancy"/>
    <property type="evidence" value="ECO:0000315"/>
    <property type="project" value="MGI"/>
</dbReference>
<dbReference type="GO" id="GO:0060744">
    <property type="term" value="P:mammary gland branching involved in thelarche"/>
    <property type="evidence" value="ECO:0000315"/>
    <property type="project" value="MGI"/>
</dbReference>
<dbReference type="GO" id="GO:0033598">
    <property type="term" value="P:mammary gland epithelial cell proliferation"/>
    <property type="evidence" value="ECO:0000315"/>
    <property type="project" value="MGI"/>
</dbReference>
<dbReference type="GO" id="GO:0035855">
    <property type="term" value="P:megakaryocyte development"/>
    <property type="evidence" value="ECO:0000315"/>
    <property type="project" value="BHF-UCL"/>
</dbReference>
<dbReference type="GO" id="GO:0030224">
    <property type="term" value="P:monocyte differentiation"/>
    <property type="evidence" value="ECO:0000315"/>
    <property type="project" value="MGI"/>
</dbReference>
<dbReference type="GO" id="GO:0042789">
    <property type="term" value="P:mRNA transcription by RNA polymerase II"/>
    <property type="evidence" value="ECO:0000315"/>
    <property type="project" value="UniProtKB"/>
</dbReference>
<dbReference type="GO" id="GO:0043066">
    <property type="term" value="P:negative regulation of apoptotic process"/>
    <property type="evidence" value="ECO:0000315"/>
    <property type="project" value="UniProtKB"/>
</dbReference>
<dbReference type="GO" id="GO:0010839">
    <property type="term" value="P:negative regulation of keratinocyte proliferation"/>
    <property type="evidence" value="ECO:0000250"/>
    <property type="project" value="UniProtKB"/>
</dbReference>
<dbReference type="GO" id="GO:0045665">
    <property type="term" value="P:negative regulation of neuron differentiation"/>
    <property type="evidence" value="ECO:0000315"/>
    <property type="project" value="UniProtKB"/>
</dbReference>
<dbReference type="GO" id="GO:0000122">
    <property type="term" value="P:negative regulation of transcription by RNA polymerase II"/>
    <property type="evidence" value="ECO:0000315"/>
    <property type="project" value="UniProtKB"/>
</dbReference>
<dbReference type="GO" id="GO:0030518">
    <property type="term" value="P:nuclear receptor-mediated steroid hormone signaling pathway"/>
    <property type="evidence" value="ECO:0000250"/>
    <property type="project" value="UniProtKB"/>
</dbReference>
<dbReference type="GO" id="GO:0035357">
    <property type="term" value="P:peroxisome proliferator activated receptor signaling pathway"/>
    <property type="evidence" value="ECO:0000315"/>
    <property type="project" value="MGI"/>
</dbReference>
<dbReference type="GO" id="GO:0008284">
    <property type="term" value="P:positive regulation of cell population proliferation"/>
    <property type="evidence" value="ECO:0000315"/>
    <property type="project" value="MGI"/>
</dbReference>
<dbReference type="GO" id="GO:0045648">
    <property type="term" value="P:positive regulation of erythrocyte differentiation"/>
    <property type="evidence" value="ECO:0000250"/>
    <property type="project" value="UniProtKB"/>
</dbReference>
<dbReference type="GO" id="GO:0070318">
    <property type="term" value="P:positive regulation of G0 to G1 transition"/>
    <property type="evidence" value="ECO:0000315"/>
    <property type="project" value="MGI"/>
</dbReference>
<dbReference type="GO" id="GO:0010628">
    <property type="term" value="P:positive regulation of gene expression"/>
    <property type="evidence" value="ECO:0000250"/>
    <property type="project" value="UniProtKB"/>
</dbReference>
<dbReference type="GO" id="GO:2000347">
    <property type="term" value="P:positive regulation of hepatocyte proliferation"/>
    <property type="evidence" value="ECO:0000315"/>
    <property type="project" value="MGI"/>
</dbReference>
<dbReference type="GO" id="GO:0033148">
    <property type="term" value="P:positive regulation of intracellular estrogen receptor signaling pathway"/>
    <property type="evidence" value="ECO:0000315"/>
    <property type="project" value="MGI"/>
</dbReference>
<dbReference type="GO" id="GO:0045618">
    <property type="term" value="P:positive regulation of keratinocyte differentiation"/>
    <property type="evidence" value="ECO:0000250"/>
    <property type="project" value="UniProtKB"/>
</dbReference>
<dbReference type="GO" id="GO:0045944">
    <property type="term" value="P:positive regulation of transcription by RNA polymerase II"/>
    <property type="evidence" value="ECO:0000314"/>
    <property type="project" value="MGI"/>
</dbReference>
<dbReference type="GO" id="GO:0032968">
    <property type="term" value="P:positive regulation of transcription elongation by RNA polymerase II"/>
    <property type="evidence" value="ECO:0000303"/>
    <property type="project" value="ComplexPortal"/>
</dbReference>
<dbReference type="GO" id="GO:0060261">
    <property type="term" value="P:positive regulation of transcription initiation by RNA polymerase II"/>
    <property type="evidence" value="ECO:0000250"/>
    <property type="project" value="UniProtKB"/>
</dbReference>
<dbReference type="GO" id="GO:0060335">
    <property type="term" value="P:positive regulation of type II interferon-mediated signaling pathway"/>
    <property type="evidence" value="ECO:0000315"/>
    <property type="project" value="MGI"/>
</dbReference>
<dbReference type="GO" id="GO:0006606">
    <property type="term" value="P:protein import into nucleus"/>
    <property type="evidence" value="ECO:0000315"/>
    <property type="project" value="MGI"/>
</dbReference>
<dbReference type="GO" id="GO:0016567">
    <property type="term" value="P:protein ubiquitination"/>
    <property type="evidence" value="ECO:0007669"/>
    <property type="project" value="Ensembl"/>
</dbReference>
<dbReference type="GO" id="GO:0006355">
    <property type="term" value="P:regulation of DNA-templated transcription"/>
    <property type="evidence" value="ECO:0000314"/>
    <property type="project" value="MGI"/>
</dbReference>
<dbReference type="GO" id="GO:2001141">
    <property type="term" value="P:regulation of RNA biosynthetic process"/>
    <property type="evidence" value="ECO:0000250"/>
    <property type="project" value="UniProtKB"/>
</dbReference>
<dbReference type="GO" id="GO:0070562">
    <property type="term" value="P:regulation of vitamin D receptor signaling pathway"/>
    <property type="evidence" value="ECO:0000315"/>
    <property type="project" value="MGI"/>
</dbReference>
<dbReference type="GO" id="GO:0003406">
    <property type="term" value="P:retinal pigment epithelium development"/>
    <property type="evidence" value="ECO:0000315"/>
    <property type="project" value="BHF-UCL"/>
</dbReference>
<dbReference type="GO" id="GO:0051123">
    <property type="term" value="P:RNA polymerase II preinitiation complex assembly"/>
    <property type="evidence" value="ECO:0000303"/>
    <property type="project" value="ComplexPortal"/>
</dbReference>
<dbReference type="GO" id="GO:0006590">
    <property type="term" value="P:thyroid hormone generation"/>
    <property type="evidence" value="ECO:0000315"/>
    <property type="project" value="MGI"/>
</dbReference>
<dbReference type="GO" id="GO:0002154">
    <property type="term" value="P:thyroid hormone receptor signaling pathway"/>
    <property type="evidence" value="ECO:0000250"/>
    <property type="project" value="UniProtKB"/>
</dbReference>
<dbReference type="GO" id="GO:0006366">
    <property type="term" value="P:transcription by RNA polymerase II"/>
    <property type="evidence" value="ECO:0000304"/>
    <property type="project" value="MGI"/>
</dbReference>
<dbReference type="GO" id="GO:0003222">
    <property type="term" value="P:ventricular trabecula myocardium morphogenesis"/>
    <property type="evidence" value="ECO:0000315"/>
    <property type="project" value="BHF-UCL"/>
</dbReference>
<dbReference type="DisProt" id="DP02151"/>
<dbReference type="InterPro" id="IPR051999">
    <property type="entry name" value="Mediator_complex_subunit_1"/>
</dbReference>
<dbReference type="InterPro" id="IPR019680">
    <property type="entry name" value="Mediator_Med1"/>
</dbReference>
<dbReference type="PANTHER" id="PTHR12881">
    <property type="entry name" value="MEDIATOR OF RNA POLYMERASE II TRANSCRIPTION SUBUNIT 1"/>
    <property type="match status" value="1"/>
</dbReference>
<dbReference type="PANTHER" id="PTHR12881:SF10">
    <property type="entry name" value="MEDIATOR OF RNA POLYMERASE II TRANSCRIPTION SUBUNIT 1"/>
    <property type="match status" value="1"/>
</dbReference>
<dbReference type="Pfam" id="PF10744">
    <property type="entry name" value="Med1"/>
    <property type="match status" value="1"/>
</dbReference>
<organism>
    <name type="scientific">Mus musculus</name>
    <name type="common">Mouse</name>
    <dbReference type="NCBI Taxonomy" id="10090"/>
    <lineage>
        <taxon>Eukaryota</taxon>
        <taxon>Metazoa</taxon>
        <taxon>Chordata</taxon>
        <taxon>Craniata</taxon>
        <taxon>Vertebrata</taxon>
        <taxon>Euteleostomi</taxon>
        <taxon>Mammalia</taxon>
        <taxon>Eutheria</taxon>
        <taxon>Euarchontoglires</taxon>
        <taxon>Glires</taxon>
        <taxon>Rodentia</taxon>
        <taxon>Myomorpha</taxon>
        <taxon>Muroidea</taxon>
        <taxon>Muridae</taxon>
        <taxon>Murinae</taxon>
        <taxon>Mus</taxon>
        <taxon>Mus</taxon>
    </lineage>
</organism>
<proteinExistence type="evidence at protein level"/>
<keyword id="KW-0002">3D-structure</keyword>
<keyword id="KW-0007">Acetylation</keyword>
<keyword id="KW-0010">Activator</keyword>
<keyword id="KW-0025">Alternative splicing</keyword>
<keyword id="KW-0217">Developmental protein</keyword>
<keyword id="KW-0238">DNA-binding</keyword>
<keyword id="KW-0539">Nucleus</keyword>
<keyword id="KW-0597">Phosphoprotein</keyword>
<keyword id="KW-1185">Reference proteome</keyword>
<keyword id="KW-0677">Repeat</keyword>
<keyword id="KW-0804">Transcription</keyword>
<keyword id="KW-0805">Transcription regulation</keyword>
<sequence>MKAQGETEDSERLSKMSSLLERLHAKFNQNRPWSETIKLVRQVMEKRVVMSSGGHQHLVSCLETLQKALKVTSLPAMTDRLESIARQNGLGSHLSASGTECYITSDMFYVEVQLDPAGQLCDVKVAHHGENPVSCPELVQQLREKNFEEFSKHLKGLVNLYNLPGDNKLKTKMYLALQSLEQDLSKMAIMYWKATNAAPLDKILHGSVGYLTPRSGGHLMNMKYYASPSDLLDDKTASPIILHEKNVPRSLGMNASVTIEGTSAMYKLPIAPLIMGSHPADNKWTPSFSAVTSANSVDLPACFFLKFPQPIPVSKAFVQKLQNCTGIPLFETPPTYLPLYELITQFELSKDPDPLPLNHNMRFYAALPGQQHCYFLNKDAPLPDGQSLQGTLVSKITFQHPGRVPLILNMIRHQVAYNTLIGSCVKRTILKEDSPGLLQFEVCPLSESRFSVSFQHPVNDSLVCVVMDVQDSTHVSCKLYKGLSDALICTDDFIAKVVQRCMSIPVTMRAIRRKAETIQADTPALSLIAETVEDMVKKNLPPASSPGYGMTTGNNPMSGTTTPTNTFPGGPITTLFNMSMSIKDRHESVGHGEDFSKVSQNPILTSLLQITGNGGSTIGSSPTPPHHTPPPVSSMAGNTKNHPMLMNLLKDNPAQDFSTLYGSSPLERQNSSSGSPRMEMCSGSNKAKKKKSSRVPPDKPKHQTEDDFQRELFSMDVDSQNPMFDVSMTADALDTPHITPAPSQCSTPPATYPQPVSHPQPSIQRMVRLSSSDSIGPDVTDILSDIAEEASKLPSTSDDCPPIGTPVRDSSSSGHSQSALFDSDVFQTNNNENPYTDPADLIADAAGSPNSDSPTNHFFPDGVDFNPDLLNSQSQSGFGEEYFDESSQSGDNDDFKGFASQALNTLGMPMLGGDNGEPKFKGSSQADTVDFSIISVAGKALGAADLMEHHSGSQSPLLTTGELGKEKTQKRVKEGNGTGASSGSGPGSDSKPGKRSRTPSNDGKSKDKPPKRKKADTEGKSPSHSSSNRPFTPPTSTGGSKSPGSSGRSQTPPGVATPPIPKITIQIPKGTVMVGKPSSHSQYTSSGSVSSSGSKSHHSHSSSSSSLASASTSGKVKSSKSEGSSSSKLSGSMYASQGSSGSSQSKNSSQTGGKPGSSPITKHGLSSGSSSTKMKPQGKPSSLMNPSISKPNISPSHSRPPGGSDKLASPMKPVPGTPPSSKAKSPISSGSSGSHVSGTSSSSGMKSSSGSASSGSVSQKTPPASNSCTPSSSSFSSSGSSMSSSQNQHGSSKGKSPSRNKKPSLTAVIDKLKHGVVTSGPGGEDPIDSQMGASTNSSNHPMSSKHNTSGGEFQSKREKSDKDKSKVSASGGSVDSSKKTSESKNVGSTGVAKIIISKHDGGSPSIKAKVTLQKPGESGGDGLRPQIASSKNYGSPLISGSTPKHERGSPSHSKSPAYTPQNVDSESESGSSIAERSYQNSPSSEDGIRPLPEYSTEKHKKHKKEKKKVRDKDRDKKKSHSMKPENWSKSPISSDPTASVTNNPILSADRPSRLSPDFMIGEEDDDLMDVALIGN</sequence>
<gene>
    <name type="primary">Med1</name>
    <name type="synonym">Crsp210</name>
    <name type="synonym">Drip205</name>
    <name type="synonym">Pbp</name>
    <name type="synonym">Pparbp</name>
    <name type="synonym">Trap220</name>
    <name type="synonym">Trip2</name>
</gene>
<name>MED1_MOUSE</name>
<reference evidence="26 27" key="1">
    <citation type="journal article" date="1997" name="J. Biol. Chem.">
        <title>Isolation and characterization of PBP, a protein that interacts with peroxisome proliferator-activated receptor.</title>
        <authorList>
            <person name="Zhu Y."/>
            <person name="Qi C."/>
            <person name="Jain S."/>
            <person name="Rao M.S."/>
            <person name="Reddy J.K."/>
        </authorList>
    </citation>
    <scope>NUCLEOTIDE SEQUENCE [MRNA] (ISOFORM 4)</scope>
    <scope>FUNCTION</scope>
    <scope>TISSUE SPECIFICITY</scope>
    <scope>INTERACTION WITH PPARA; PPARG; RARA; RXRA AND THRB</scope>
    <source>
        <tissue evidence="21">Liver</tissue>
    </source>
</reference>
<reference evidence="26 31" key="2">
    <citation type="journal article" date="2001" name="Mamm. Genome">
        <title>High-throughput sequence identification of gene coding variants within alcohol-related QTLs.</title>
        <authorList>
            <person name="Ehringer M.A."/>
            <person name="Thompson J."/>
            <person name="Conroy O."/>
            <person name="Xu Y."/>
            <person name="Yang F."/>
            <person name="Canniff J."/>
            <person name="Beeson M."/>
            <person name="Gordon L."/>
            <person name="Bennett B."/>
            <person name="Johnson T.E."/>
            <person name="Sikela J.M."/>
        </authorList>
    </citation>
    <scope>NUCLEOTIDE SEQUENCE [MRNA] (ISOFORM 4)</scope>
    <scope>VARIANTS SER-960 AND MET-1348</scope>
    <source>
        <strain evidence="31">ILS</strain>
        <strain evidence="30">ISS</strain>
    </source>
</reference>
<reference evidence="26 32" key="3">
    <citation type="journal article" date="2003" name="Mol. Endocrinol.">
        <title>The thyroid hormone receptor-associated protein TRAP220 is required at distinct embryonic stages in placental, cardiac, and hepatic development.</title>
        <authorList>
            <person name="Landles C."/>
            <person name="Chalk S."/>
            <person name="Steel J.H."/>
            <person name="Rosewell I."/>
            <person name="Spencer-Dene B."/>
            <person name="Lalani E.-N."/>
            <person name="Parker M.G."/>
        </authorList>
    </citation>
    <scope>NUCLEOTIDE SEQUENCE [GENOMIC DNA]</scope>
    <scope>FUNCTION</scope>
    <scope>TISSUE SPECIFICITY</scope>
    <scope>DEVELOPMENTAL STAGE</scope>
    <scope>VARIANTS SER-960 AND MET-1348</scope>
    <source>
        <strain evidence="32">129/Ola</strain>
    </source>
</reference>
<reference evidence="26 33" key="4">
    <citation type="journal article" date="2005" name="Science">
        <title>The transcriptional landscape of the mammalian genome.</title>
        <authorList>
            <person name="Carninci P."/>
            <person name="Kasukawa T."/>
            <person name="Katayama S."/>
            <person name="Gough J."/>
            <person name="Frith M.C."/>
            <person name="Maeda N."/>
            <person name="Oyama R."/>
            <person name="Ravasi T."/>
            <person name="Lenhard B."/>
            <person name="Wells C."/>
            <person name="Kodzius R."/>
            <person name="Shimokawa K."/>
            <person name="Bajic V.B."/>
            <person name="Brenner S.E."/>
            <person name="Batalov S."/>
            <person name="Forrest A.R."/>
            <person name="Zavolan M."/>
            <person name="Davis M.J."/>
            <person name="Wilming L.G."/>
            <person name="Aidinis V."/>
            <person name="Allen J.E."/>
            <person name="Ambesi-Impiombato A."/>
            <person name="Apweiler R."/>
            <person name="Aturaliya R.N."/>
            <person name="Bailey T.L."/>
            <person name="Bansal M."/>
            <person name="Baxter L."/>
            <person name="Beisel K.W."/>
            <person name="Bersano T."/>
            <person name="Bono H."/>
            <person name="Chalk A.M."/>
            <person name="Chiu K.P."/>
            <person name="Choudhary V."/>
            <person name="Christoffels A."/>
            <person name="Clutterbuck D.R."/>
            <person name="Crowe M.L."/>
            <person name="Dalla E."/>
            <person name="Dalrymple B.P."/>
            <person name="de Bono B."/>
            <person name="Della Gatta G."/>
            <person name="di Bernardo D."/>
            <person name="Down T."/>
            <person name="Engstrom P."/>
            <person name="Fagiolini M."/>
            <person name="Faulkner G."/>
            <person name="Fletcher C.F."/>
            <person name="Fukushima T."/>
            <person name="Furuno M."/>
            <person name="Futaki S."/>
            <person name="Gariboldi M."/>
            <person name="Georgii-Hemming P."/>
            <person name="Gingeras T.R."/>
            <person name="Gojobori T."/>
            <person name="Green R.E."/>
            <person name="Gustincich S."/>
            <person name="Harbers M."/>
            <person name="Hayashi Y."/>
            <person name="Hensch T.K."/>
            <person name="Hirokawa N."/>
            <person name="Hill D."/>
            <person name="Huminiecki L."/>
            <person name="Iacono M."/>
            <person name="Ikeo K."/>
            <person name="Iwama A."/>
            <person name="Ishikawa T."/>
            <person name="Jakt M."/>
            <person name="Kanapin A."/>
            <person name="Katoh M."/>
            <person name="Kawasawa Y."/>
            <person name="Kelso J."/>
            <person name="Kitamura H."/>
            <person name="Kitano H."/>
            <person name="Kollias G."/>
            <person name="Krishnan S.P."/>
            <person name="Kruger A."/>
            <person name="Kummerfeld S.K."/>
            <person name="Kurochkin I.V."/>
            <person name="Lareau L.F."/>
            <person name="Lazarevic D."/>
            <person name="Lipovich L."/>
            <person name="Liu J."/>
            <person name="Liuni S."/>
            <person name="McWilliam S."/>
            <person name="Madan Babu M."/>
            <person name="Madera M."/>
            <person name="Marchionni L."/>
            <person name="Matsuda H."/>
            <person name="Matsuzawa S."/>
            <person name="Miki H."/>
            <person name="Mignone F."/>
            <person name="Miyake S."/>
            <person name="Morris K."/>
            <person name="Mottagui-Tabar S."/>
            <person name="Mulder N."/>
            <person name="Nakano N."/>
            <person name="Nakauchi H."/>
            <person name="Ng P."/>
            <person name="Nilsson R."/>
            <person name="Nishiguchi S."/>
            <person name="Nishikawa S."/>
            <person name="Nori F."/>
            <person name="Ohara O."/>
            <person name="Okazaki Y."/>
            <person name="Orlando V."/>
            <person name="Pang K.C."/>
            <person name="Pavan W.J."/>
            <person name="Pavesi G."/>
            <person name="Pesole G."/>
            <person name="Petrovsky N."/>
            <person name="Piazza S."/>
            <person name="Reed J."/>
            <person name="Reid J.F."/>
            <person name="Ring B.Z."/>
            <person name="Ringwald M."/>
            <person name="Rost B."/>
            <person name="Ruan Y."/>
            <person name="Salzberg S.L."/>
            <person name="Sandelin A."/>
            <person name="Schneider C."/>
            <person name="Schoenbach C."/>
            <person name="Sekiguchi K."/>
            <person name="Semple C.A."/>
            <person name="Seno S."/>
            <person name="Sessa L."/>
            <person name="Sheng Y."/>
            <person name="Shibata Y."/>
            <person name="Shimada H."/>
            <person name="Shimada K."/>
            <person name="Silva D."/>
            <person name="Sinclair B."/>
            <person name="Sperling S."/>
            <person name="Stupka E."/>
            <person name="Sugiura K."/>
            <person name="Sultana R."/>
            <person name="Takenaka Y."/>
            <person name="Taki K."/>
            <person name="Tammoja K."/>
            <person name="Tan S.L."/>
            <person name="Tang S."/>
            <person name="Taylor M.S."/>
            <person name="Tegner J."/>
            <person name="Teichmann S.A."/>
            <person name="Ueda H.R."/>
            <person name="van Nimwegen E."/>
            <person name="Verardo R."/>
            <person name="Wei C.L."/>
            <person name="Yagi K."/>
            <person name="Yamanishi H."/>
            <person name="Zabarovsky E."/>
            <person name="Zhu S."/>
            <person name="Zimmer A."/>
            <person name="Hide W."/>
            <person name="Bult C."/>
            <person name="Grimmond S.M."/>
            <person name="Teasdale R.D."/>
            <person name="Liu E.T."/>
            <person name="Brusic V."/>
            <person name="Quackenbush J."/>
            <person name="Wahlestedt C."/>
            <person name="Mattick J.S."/>
            <person name="Hume D.A."/>
            <person name="Kai C."/>
            <person name="Sasaki D."/>
            <person name="Tomaru Y."/>
            <person name="Fukuda S."/>
            <person name="Kanamori-Katayama M."/>
            <person name="Suzuki M."/>
            <person name="Aoki J."/>
            <person name="Arakawa T."/>
            <person name="Iida J."/>
            <person name="Imamura K."/>
            <person name="Itoh M."/>
            <person name="Kato T."/>
            <person name="Kawaji H."/>
            <person name="Kawagashira N."/>
            <person name="Kawashima T."/>
            <person name="Kojima M."/>
            <person name="Kondo S."/>
            <person name="Konno H."/>
            <person name="Nakano K."/>
            <person name="Ninomiya N."/>
            <person name="Nishio T."/>
            <person name="Okada M."/>
            <person name="Plessy C."/>
            <person name="Shibata K."/>
            <person name="Shiraki T."/>
            <person name="Suzuki S."/>
            <person name="Tagami M."/>
            <person name="Waki K."/>
            <person name="Watahiki A."/>
            <person name="Okamura-Oho Y."/>
            <person name="Suzuki H."/>
            <person name="Kawai J."/>
            <person name="Hayashizaki Y."/>
        </authorList>
    </citation>
    <scope>NUCLEOTIDE SEQUENCE [LARGE SCALE MRNA] (ISOFORM 3)</scope>
    <scope>NUCLEOTIDE SEQUENCE [LARGE SCALE MRNA] OF 1-389 (ISOFORMS 1/4)</scope>
    <scope>NUCLEOTIDE SEQUENCE [LARGE SCALE MRNA] OF 1-964 (ISOFORM 1)</scope>
    <source>
        <strain evidence="33">C57BL/6J</strain>
        <tissue evidence="17">Embryonic stem cell</tissue>
        <tissue evidence="33">Ovary</tissue>
    </source>
</reference>
<reference key="5">
    <citation type="journal article" date="2009" name="PLoS Biol.">
        <title>Lineage-specific biology revealed by a finished genome assembly of the mouse.</title>
        <authorList>
            <person name="Church D.M."/>
            <person name="Goodstadt L."/>
            <person name="Hillier L.W."/>
            <person name="Zody M.C."/>
            <person name="Goldstein S."/>
            <person name="She X."/>
            <person name="Bult C.J."/>
            <person name="Agarwala R."/>
            <person name="Cherry J.L."/>
            <person name="DiCuccio M."/>
            <person name="Hlavina W."/>
            <person name="Kapustin Y."/>
            <person name="Meric P."/>
            <person name="Maglott D."/>
            <person name="Birtle Z."/>
            <person name="Marques A.C."/>
            <person name="Graves T."/>
            <person name="Zhou S."/>
            <person name="Teague B."/>
            <person name="Potamousis K."/>
            <person name="Churas C."/>
            <person name="Place M."/>
            <person name="Herschleb J."/>
            <person name="Runnheim R."/>
            <person name="Forrest D."/>
            <person name="Amos-Landgraf J."/>
            <person name="Schwartz D.C."/>
            <person name="Cheng Z."/>
            <person name="Lindblad-Toh K."/>
            <person name="Eichler E.E."/>
            <person name="Ponting C.P."/>
        </authorList>
    </citation>
    <scope>NUCLEOTIDE SEQUENCE [LARGE SCALE GENOMIC DNA]</scope>
    <source>
        <strain>C57BL/6J</strain>
    </source>
</reference>
<reference evidence="26 29" key="6">
    <citation type="journal article" date="2004" name="Genome Res.">
        <title>The status, quality, and expansion of the NIH full-length cDNA project: the Mammalian Gene Collection (MGC).</title>
        <authorList>
            <consortium name="The MGC Project Team"/>
        </authorList>
    </citation>
    <scope>NUCLEOTIDE SEQUENCE [LARGE SCALE MRNA] (ISOFORMS 2 AND 3)</scope>
    <source>
        <strain evidence="29">C57BL/6J</strain>
        <strain evidence="28">Czech II</strain>
        <tissue evidence="14">Brain</tissue>
        <tissue evidence="14">Mammary gland</tissue>
    </source>
</reference>
<reference key="7">
    <citation type="journal article" date="2000" name="Mol. Cell">
        <title>Involvement of the TRAP220 component of the TRAP/SMCC coactivator complex in embryonic development and thyroid hormone action.</title>
        <authorList>
            <person name="Ito M."/>
            <person name="Yuan C.-X."/>
            <person name="Okano H.J."/>
            <person name="Darnell R.B."/>
            <person name="Roeder R.G."/>
        </authorList>
    </citation>
    <scope>FUNCTION</scope>
    <scope>DEVELOPMENTAL STAGE</scope>
</reference>
<reference evidence="26" key="8">
    <citation type="journal article" date="2001" name="Mol. Endocrinol.">
        <title>Regulation of glucocorticoid receptor activity by 14-3-3-dependent intracellular relocalization of the corepressor RIP140.</title>
        <authorList>
            <person name="Zilliacus J."/>
            <person name="Holter E."/>
            <person name="Wakui H."/>
            <person name="Tazawa H."/>
            <person name="Treuter E."/>
            <person name="Gustafsson J.-A."/>
        </authorList>
    </citation>
    <scope>INTERACTION WITH YWHAH</scope>
</reference>
<reference key="9">
    <citation type="journal article" date="2002" name="Nature">
        <title>Transcription coactivator TRAP220 is required for PPAR gamma 2-stimulated adipogenesis.</title>
        <authorList>
            <person name="Ge K."/>
            <person name="Guermah M."/>
            <person name="Yuan C.-X."/>
            <person name="Ito M."/>
            <person name="Wallberg A.E."/>
            <person name="Spiegelman B.M."/>
            <person name="Roeder R.G."/>
        </authorList>
    </citation>
    <scope>FUNCTION</scope>
</reference>
<reference key="10">
    <citation type="journal article" date="2002" name="Proc. Natl. Acad. Sci. U.S.A.">
        <title>The TRAP/Mediator coactivator complex interacts directly with estrogen receptors alpha and beta through the TRAP220 subunit and directly enhances estrogen receptor function in vitro.</title>
        <authorList>
            <person name="Kang Y.K."/>
            <person name="Guermah M."/>
            <person name="Yuan C.-X."/>
            <person name="Roeder R.G."/>
        </authorList>
    </citation>
    <scope>FUNCTION</scope>
    <scope>INTERACTION OF THE MEDIATOR COMPLEX WITH ESR1 AND ESR2</scope>
</reference>
<reference key="11">
    <citation type="journal article" date="2003" name="J. Biol. Chem.">
        <title>The AF-1 domain of the orphan nuclear receptor NOR-1 mediates trans-activation, coactivator recruitment, and activation by the purine anti-metabolite 6-mercaptopurine.</title>
        <authorList>
            <person name="Wansa K.D."/>
            <person name="Harris J.M."/>
            <person name="Yan G."/>
            <person name="Ordentlich P."/>
            <person name="Muscat G.E."/>
        </authorList>
    </citation>
    <scope>INTERACTION WITH NR4A3</scope>
</reference>
<reference key="12">
    <citation type="journal article" date="2003" name="Mol. Cell">
        <title>Coordination of p300-mediated chromatin remodeling and TRAP/mediator function through coactivator PGC-1alpha.</title>
        <authorList>
            <person name="Wallberg A.E."/>
            <person name="Yamamura S."/>
            <person name="Malik S."/>
            <person name="Spiegelman B.M."/>
            <person name="Roeder R.G."/>
        </authorList>
    </citation>
    <scope>FUNCTION</scope>
    <scope>INTERACTION WITH PPARGC1A</scope>
</reference>
<reference key="13">
    <citation type="journal article" date="2004" name="J. Biol. Chem.">
        <title>Transcription coactivator PBP, the peroxisome proliferator-activated receptor (PPAR)-binding protein, is required for PPARalpha-regulated gene expression in liver.</title>
        <authorList>
            <person name="Jia Y."/>
            <person name="Qi C."/>
            <person name="Kashireddy P."/>
            <person name="Surapureddi S."/>
            <person name="Zhu Y.-J."/>
            <person name="Rao M.S."/>
            <person name="Le Roith D."/>
            <person name="Chambon P."/>
            <person name="Gonzalez F.J."/>
            <person name="Reddy J.K."/>
        </authorList>
    </citation>
    <scope>FUNCTION</scope>
    <scope>SUBCELLULAR LOCATION</scope>
</reference>
<reference key="14">
    <citation type="journal article" date="2004" name="J. Biol. Chem.">
        <authorList>
            <person name="Jia Y."/>
            <person name="Qi C."/>
            <person name="Kashireddy P."/>
            <person name="Surapureddi S."/>
            <person name="Zhu Y.-J."/>
            <person name="Rao M.S."/>
            <person name="Le Roith D."/>
            <person name="Chambon P."/>
            <person name="Gonzalez F.J."/>
            <person name="Reddy J.K."/>
        </authorList>
    </citation>
    <scope>ERRATUM OF PUBMED:15150259</scope>
</reference>
<reference key="15">
    <citation type="journal article" date="2004" name="Mol. Cell. Biol.">
        <title>Structural and functional organization of TRAP220, the TRAP/mediator subunit that is targeted by nuclear receptors.</title>
        <authorList>
            <person name="Malik S."/>
            <person name="Guermah M."/>
            <person name="Yuan C.-X."/>
            <person name="Wu W."/>
            <person name="Yamamura S."/>
            <person name="Roeder R.G."/>
        </authorList>
    </citation>
    <scope>FUNCTION</scope>
    <scope>INTERACTION OF THE MEDIATOR COMPLEX WITH THRA</scope>
</reference>
<reference key="16">
    <citation type="journal article" date="2005" name="Mol. Cell">
        <title>Thyroid hormone-induced juxtaposition of regulatory elements/factors and chromatin remodeling of Crabp1 dependent on MED1/TRAP220.</title>
        <authorList>
            <person name="Park S.W."/>
            <person name="Li G."/>
            <person name="Lin Y.-P."/>
            <person name="Barrero M.J."/>
            <person name="Ge K."/>
            <person name="Roeder R.G."/>
            <person name="Wei L.-N."/>
        </authorList>
    </citation>
    <scope>FUNCTION</scope>
    <scope>ASSOCIATION WITH PROMOTER REGIONS</scope>
</reference>
<reference key="17">
    <citation type="journal article" date="2006" name="Proc. Natl. Acad. Sci. U.S.A.">
        <title>The mediator complex functions as a coactivator for GATA-1 in erythropoiesis via subunit Med1/TRAP220.</title>
        <authorList>
            <person name="Stumpf M."/>
            <person name="Waskow C."/>
            <person name="Kroetschel M."/>
            <person name="van Essen D."/>
            <person name="Rodriguez P."/>
            <person name="Zhang X."/>
            <person name="Guyot B."/>
            <person name="Roeder R.G."/>
            <person name="Borggrefe T."/>
        </authorList>
    </citation>
    <scope>FUNCTION</scope>
    <scope>INTERACTION WITH GATA1</scope>
    <scope>ASSOCIATION WITH PROMOTER REGIONS</scope>
</reference>
<reference key="18">
    <citation type="journal article" date="2007" name="Proc. Natl. Acad. Sci. U.S.A.">
        <authorList>
            <person name="Stumpf M."/>
            <person name="Waskow C."/>
            <person name="Kroetschel M."/>
            <person name="van Essen D."/>
            <person name="Rodriguez P."/>
            <person name="Zhang X."/>
            <person name="Guyot B."/>
            <person name="Roeder R.G."/>
            <person name="Borggrefe T."/>
        </authorList>
    </citation>
    <scope>ERRATUM OF PUBMED:17132730</scope>
</reference>
<reference key="19">
    <citation type="journal article" date="2007" name="Science">
        <title>ATM and ATR substrate analysis reveals extensive protein networks responsive to DNA damage.</title>
        <authorList>
            <person name="Matsuoka S."/>
            <person name="Ballif B.A."/>
            <person name="Smogorzewska A."/>
            <person name="McDonald E.R. III"/>
            <person name="Hurov K.E."/>
            <person name="Luo J."/>
            <person name="Bakalarski C.E."/>
            <person name="Zhao Z."/>
            <person name="Solimini N."/>
            <person name="Lerenthal Y."/>
            <person name="Shiloh Y."/>
            <person name="Gygi S.P."/>
            <person name="Elledge S.J."/>
        </authorList>
    </citation>
    <scope>PHOSPHORYLATION [LARGE SCALE ANALYSIS] AT SER-953 AND SER-955</scope>
    <scope>IDENTIFICATION BY MASS SPECTROMETRY [LARGE SCALE ANALYSIS]</scope>
    <source>
        <tissue>Embryonic fibroblast</tissue>
    </source>
</reference>
<reference key="20">
    <citation type="journal article" date="2010" name="Cell">
        <title>A tissue-specific atlas of mouse protein phosphorylation and expression.</title>
        <authorList>
            <person name="Huttlin E.L."/>
            <person name="Jedrychowski M.P."/>
            <person name="Elias J.E."/>
            <person name="Goswami T."/>
            <person name="Rad R."/>
            <person name="Beausoleil S.A."/>
            <person name="Villen J."/>
            <person name="Haas W."/>
            <person name="Sowa M.E."/>
            <person name="Gygi S.P."/>
        </authorList>
    </citation>
    <scope>PHOSPHORYLATION [LARGE SCALE ANALYSIS] AT SER-664; THR-805; SER-955; THR-1051; THR-1057; SER-1158; SER-1209; SER-1435; THR-1442; SER-1465; SER-1467; SER-1481 AND SER-1484</scope>
    <scope>IDENTIFICATION BY MASS SPECTROMETRY [LARGE SCALE ANALYSIS]</scope>
    <source>
        <tissue>Brain</tissue>
        <tissue>Brown adipose tissue</tissue>
        <tissue>Heart</tissue>
        <tissue>Kidney</tissue>
        <tissue>Liver</tissue>
        <tissue>Lung</tissue>
        <tissue>Pancreas</tissue>
        <tissue>Spleen</tissue>
        <tissue>Testis</tissue>
    </source>
</reference>
<reference key="21">
    <citation type="journal article" date="2013" name="Proc. Natl. Acad. Sci. U.S.A.">
        <title>A positive feedback loop links circadian clock factor CLOCK-BMAL1 to the basic transcriptional machinery.</title>
        <authorList>
            <person name="Lande-Diner L."/>
            <person name="Boyault C."/>
            <person name="Kim J.Y."/>
            <person name="Weitz C.J."/>
        </authorList>
    </citation>
    <scope>INTERACTION WITH CLOCK</scope>
</reference>
<reference key="22">
    <citation type="journal article" date="2020" name="J. Exp. Med.">
        <title>USP22 controls iNKT immunity through MED1 suppression of histone H2A monoubiquitination.</title>
        <authorList>
            <person name="Zhang Y."/>
            <person name="Wang Y."/>
            <person name="Gao B."/>
            <person name="Sun Y."/>
            <person name="Cao L."/>
            <person name="Genardi S.M."/>
            <person name="Wang C.R."/>
            <person name="Li H."/>
            <person name="Sun Z."/>
            <person name="Yang Y."/>
            <person name="Fang D."/>
        </authorList>
    </citation>
    <scope>INTERACTION WITH USP22</scope>
</reference>
<reference key="23">
    <citation type="journal article" date="2005" name="J. Biol. Chem.">
        <title>Characterization of the interaction between retinoic acid receptor/retinoid X receptor (RAR/RXR) heterodimers and transcriptional coactivators through structural and fluorescence anisotropy studies.</title>
        <authorList>
            <person name="Pogenberg V."/>
            <person name="Guichou J.F."/>
            <person name="Vivat-Hannah V."/>
            <person name="Kammerer S."/>
            <person name="Perez E."/>
            <person name="Germain P."/>
            <person name="de Lera A.R."/>
            <person name="Gronemeyer H."/>
            <person name="Royer C.A."/>
            <person name="Bourguet W."/>
        </authorList>
    </citation>
    <scope>X-RAY CRYSTALLOGRAPHY (2.9 ANGSTROMS) OF 641-654 IN COMPLEX WITH RARB AND RXRA</scope>
</reference>
<accession>Q925J9</accession>
<accession>A2A526</accession>
<accession>A2A528</accession>
<accession>O88323</accession>
<accession>Q3UHV0</accession>
<accession>Q6AXD5</accession>
<accession>Q8BW37</accession>
<accession>Q8BX19</accession>
<accession>Q8VDQ7</accession>
<accession>Q925K0</accession>